<evidence type="ECO:0000255" key="1">
    <source>
        <dbReference type="HAMAP-Rule" id="MF_00038"/>
    </source>
</evidence>
<feature type="chain" id="PRO_1000002997" description="Phospho-N-acetylmuramoyl-pentapeptide-transferase">
    <location>
        <begin position="1"/>
        <end position="329"/>
    </location>
</feature>
<feature type="transmembrane region" description="Helical" evidence="1">
    <location>
        <begin position="1"/>
        <end position="21"/>
    </location>
</feature>
<feature type="transmembrane region" description="Helical" evidence="1">
    <location>
        <begin position="53"/>
        <end position="73"/>
    </location>
</feature>
<feature type="transmembrane region" description="Helical" evidence="1">
    <location>
        <begin position="76"/>
        <end position="96"/>
    </location>
</feature>
<feature type="transmembrane region" description="Helical" evidence="1">
    <location>
        <begin position="109"/>
        <end position="129"/>
    </location>
</feature>
<feature type="transmembrane region" description="Helical" evidence="1">
    <location>
        <begin position="141"/>
        <end position="161"/>
    </location>
</feature>
<feature type="transmembrane region" description="Helical" evidence="1">
    <location>
        <begin position="175"/>
        <end position="195"/>
    </location>
</feature>
<feature type="transmembrane region" description="Helical" evidence="1">
    <location>
        <begin position="198"/>
        <end position="218"/>
    </location>
</feature>
<feature type="transmembrane region" description="Helical" evidence="1">
    <location>
        <begin position="237"/>
        <end position="257"/>
    </location>
</feature>
<feature type="transmembrane region" description="Helical" evidence="1">
    <location>
        <begin position="309"/>
        <end position="329"/>
    </location>
</feature>
<organism>
    <name type="scientific">Lactococcus lactis subsp. cremoris (strain MG1363)</name>
    <dbReference type="NCBI Taxonomy" id="416870"/>
    <lineage>
        <taxon>Bacteria</taxon>
        <taxon>Bacillati</taxon>
        <taxon>Bacillota</taxon>
        <taxon>Bacilli</taxon>
        <taxon>Lactobacillales</taxon>
        <taxon>Streptococcaceae</taxon>
        <taxon>Lactococcus</taxon>
        <taxon>Lactococcus cremoris subsp. cremoris</taxon>
    </lineage>
</organism>
<dbReference type="EC" id="2.7.8.13" evidence="1"/>
<dbReference type="EMBL" id="AM406671">
    <property type="protein sequence ID" value="CAL98252.1"/>
    <property type="molecule type" value="Genomic_DNA"/>
</dbReference>
<dbReference type="RefSeq" id="WP_011835486.1">
    <property type="nucleotide sequence ID" value="NC_009004.1"/>
</dbReference>
<dbReference type="SMR" id="A2RLT1"/>
<dbReference type="STRING" id="416870.llmg_1678"/>
<dbReference type="GeneID" id="61109154"/>
<dbReference type="KEGG" id="llm:llmg_1678"/>
<dbReference type="eggNOG" id="COG0472">
    <property type="taxonomic scope" value="Bacteria"/>
</dbReference>
<dbReference type="HOGENOM" id="CLU_023982_0_1_9"/>
<dbReference type="OrthoDB" id="9805475at2"/>
<dbReference type="PhylomeDB" id="A2RLT1"/>
<dbReference type="UniPathway" id="UPA00219"/>
<dbReference type="Proteomes" id="UP000000364">
    <property type="component" value="Chromosome"/>
</dbReference>
<dbReference type="GO" id="GO:0005886">
    <property type="term" value="C:plasma membrane"/>
    <property type="evidence" value="ECO:0007669"/>
    <property type="project" value="UniProtKB-SubCell"/>
</dbReference>
<dbReference type="GO" id="GO:0046872">
    <property type="term" value="F:metal ion binding"/>
    <property type="evidence" value="ECO:0007669"/>
    <property type="project" value="UniProtKB-KW"/>
</dbReference>
<dbReference type="GO" id="GO:0008963">
    <property type="term" value="F:phospho-N-acetylmuramoyl-pentapeptide-transferase activity"/>
    <property type="evidence" value="ECO:0007669"/>
    <property type="project" value="UniProtKB-UniRule"/>
</dbReference>
<dbReference type="GO" id="GO:0051301">
    <property type="term" value="P:cell division"/>
    <property type="evidence" value="ECO:0007669"/>
    <property type="project" value="UniProtKB-KW"/>
</dbReference>
<dbReference type="GO" id="GO:0071555">
    <property type="term" value="P:cell wall organization"/>
    <property type="evidence" value="ECO:0007669"/>
    <property type="project" value="UniProtKB-KW"/>
</dbReference>
<dbReference type="GO" id="GO:0009252">
    <property type="term" value="P:peptidoglycan biosynthetic process"/>
    <property type="evidence" value="ECO:0007669"/>
    <property type="project" value="UniProtKB-UniRule"/>
</dbReference>
<dbReference type="GO" id="GO:0008360">
    <property type="term" value="P:regulation of cell shape"/>
    <property type="evidence" value="ECO:0007669"/>
    <property type="project" value="UniProtKB-KW"/>
</dbReference>
<dbReference type="CDD" id="cd06852">
    <property type="entry name" value="GT_MraY"/>
    <property type="match status" value="1"/>
</dbReference>
<dbReference type="HAMAP" id="MF_00038">
    <property type="entry name" value="MraY"/>
    <property type="match status" value="1"/>
</dbReference>
<dbReference type="InterPro" id="IPR000715">
    <property type="entry name" value="Glycosyl_transferase_4"/>
</dbReference>
<dbReference type="InterPro" id="IPR003524">
    <property type="entry name" value="PNAcMuramoyl-5peptid_Trfase"/>
</dbReference>
<dbReference type="InterPro" id="IPR018480">
    <property type="entry name" value="PNAcMuramoyl-5peptid_Trfase_CS"/>
</dbReference>
<dbReference type="NCBIfam" id="TIGR00445">
    <property type="entry name" value="mraY"/>
    <property type="match status" value="1"/>
</dbReference>
<dbReference type="PANTHER" id="PTHR22926">
    <property type="entry name" value="PHOSPHO-N-ACETYLMURAMOYL-PENTAPEPTIDE-TRANSFERASE"/>
    <property type="match status" value="1"/>
</dbReference>
<dbReference type="PANTHER" id="PTHR22926:SF5">
    <property type="entry name" value="PHOSPHO-N-ACETYLMURAMOYL-PENTAPEPTIDE-TRANSFERASE HOMOLOG"/>
    <property type="match status" value="1"/>
</dbReference>
<dbReference type="Pfam" id="PF00953">
    <property type="entry name" value="Glycos_transf_4"/>
    <property type="match status" value="1"/>
</dbReference>
<dbReference type="Pfam" id="PF10555">
    <property type="entry name" value="MraY_sig1"/>
    <property type="match status" value="1"/>
</dbReference>
<dbReference type="PROSITE" id="PS01348">
    <property type="entry name" value="MRAY_2"/>
    <property type="match status" value="1"/>
</dbReference>
<sequence length="329" mass="36221">MLLNGIVAAVITMIITIIGIPRFIMFFHKKKLGGQPTLEDVKQHASKAGTPTMGGFVFVVVSLVVSLVAALVFGKFSPAFITAWWVFAMYAVIGFLDDFLKVFKQINEGLTAKQKMLAQILIGIVSYFIYSHGEKSHIIHILSWQVNIGIFFSIFIIIWLVGWSNAVNLTDGIDGLASITVAISLTAYAVIAVVHQQYDVLLIILSVIGGLLGFFVFNHKPAKIFMGDVGSLALGGFLAIVSILLHAEWTLLLIGAVYVIETLSVMLQVAYFKKTGGKRIFRMTPIHHHFELGGFSGKAAGWSEWKIDIVFWLFTAVLSVIALCIYFAF</sequence>
<accession>A2RLT1</accession>
<proteinExistence type="inferred from homology"/>
<comment type="function">
    <text evidence="1">Catalyzes the initial step of the lipid cycle reactions in the biosynthesis of the cell wall peptidoglycan: transfers peptidoglycan precursor phospho-MurNAc-pentapeptide from UDP-MurNAc-pentapeptide onto the lipid carrier undecaprenyl phosphate, yielding undecaprenyl-pyrophosphoryl-MurNAc-pentapeptide, known as lipid I.</text>
</comment>
<comment type="catalytic activity">
    <reaction evidence="1">
        <text>UDP-N-acetyl-alpha-D-muramoyl-L-alanyl-gamma-D-glutamyl-L-lysyl-D-alanyl-D-alanine + di-trans,octa-cis-undecaprenyl phosphate = Mur2Ac(oyl-L-Ala-gamma-D-Glu-L-Lys-D-Ala-D-Ala)-di-trans,octa-cis-undecaprenyl diphosphate + UMP</text>
        <dbReference type="Rhea" id="RHEA:21920"/>
        <dbReference type="ChEBI" id="CHEBI:57865"/>
        <dbReference type="ChEBI" id="CHEBI:60032"/>
        <dbReference type="ChEBI" id="CHEBI:60392"/>
        <dbReference type="ChEBI" id="CHEBI:70758"/>
        <dbReference type="EC" id="2.7.8.13"/>
    </reaction>
</comment>
<comment type="cofactor">
    <cofactor evidence="1">
        <name>Mg(2+)</name>
        <dbReference type="ChEBI" id="CHEBI:18420"/>
    </cofactor>
</comment>
<comment type="pathway">
    <text evidence="1">Cell wall biogenesis; peptidoglycan biosynthesis.</text>
</comment>
<comment type="subcellular location">
    <subcellularLocation>
        <location evidence="1">Cell membrane</location>
        <topology evidence="1">Multi-pass membrane protein</topology>
    </subcellularLocation>
</comment>
<comment type="similarity">
    <text evidence="1">Belongs to the glycosyltransferase 4 family. MraY subfamily.</text>
</comment>
<gene>
    <name evidence="1" type="primary">mraY</name>
    <name type="ordered locus">llmg_1678</name>
</gene>
<name>MRAY_LACLM</name>
<keyword id="KW-0131">Cell cycle</keyword>
<keyword id="KW-0132">Cell division</keyword>
<keyword id="KW-1003">Cell membrane</keyword>
<keyword id="KW-0133">Cell shape</keyword>
<keyword id="KW-0961">Cell wall biogenesis/degradation</keyword>
<keyword id="KW-0460">Magnesium</keyword>
<keyword id="KW-0472">Membrane</keyword>
<keyword id="KW-0479">Metal-binding</keyword>
<keyword id="KW-0573">Peptidoglycan synthesis</keyword>
<keyword id="KW-0808">Transferase</keyword>
<keyword id="KW-0812">Transmembrane</keyword>
<keyword id="KW-1133">Transmembrane helix</keyword>
<protein>
    <recommendedName>
        <fullName evidence="1">Phospho-N-acetylmuramoyl-pentapeptide-transferase</fullName>
        <ecNumber evidence="1">2.7.8.13</ecNumber>
    </recommendedName>
    <alternativeName>
        <fullName evidence="1">UDP-MurNAc-pentapeptide phosphotransferase</fullName>
    </alternativeName>
</protein>
<reference key="1">
    <citation type="journal article" date="2007" name="J. Bacteriol.">
        <title>The complete genome sequence of the lactic acid bacterial paradigm Lactococcus lactis subsp. cremoris MG1363.</title>
        <authorList>
            <person name="Wegmann U."/>
            <person name="O'Connell-Motherway M."/>
            <person name="Zomer A."/>
            <person name="Buist G."/>
            <person name="Shearman C."/>
            <person name="Canchaya C."/>
            <person name="Ventura M."/>
            <person name="Goesmann A."/>
            <person name="Gasson M.J."/>
            <person name="Kuipers O.P."/>
            <person name="van Sinderen D."/>
            <person name="Kok J."/>
        </authorList>
    </citation>
    <scope>NUCLEOTIDE SEQUENCE [LARGE SCALE GENOMIC DNA]</scope>
    <source>
        <strain>MG1363</strain>
    </source>
</reference>